<feature type="chain" id="PRO_0000069806" description="Melanocyte-stimulating hormone receptor">
    <location>
        <begin position="1"/>
        <end position="317"/>
    </location>
</feature>
<feature type="topological domain" description="Extracellular" evidence="2">
    <location>
        <begin position="1"/>
        <end position="37"/>
    </location>
</feature>
<feature type="transmembrane region" description="Helical; Name=1" evidence="2">
    <location>
        <begin position="38"/>
        <end position="63"/>
    </location>
</feature>
<feature type="topological domain" description="Cytoplasmic" evidence="2">
    <location>
        <begin position="64"/>
        <end position="72"/>
    </location>
</feature>
<feature type="transmembrane region" description="Helical; Name=2" evidence="2">
    <location>
        <begin position="73"/>
        <end position="93"/>
    </location>
</feature>
<feature type="topological domain" description="Extracellular" evidence="2">
    <location>
        <begin position="94"/>
        <end position="118"/>
    </location>
</feature>
<feature type="transmembrane region" description="Helical; Name=3" evidence="2">
    <location>
        <begin position="119"/>
        <end position="140"/>
    </location>
</feature>
<feature type="topological domain" description="Cytoplasmic" evidence="2">
    <location>
        <begin position="141"/>
        <end position="163"/>
    </location>
</feature>
<feature type="transmembrane region" description="Helical; Name=4" evidence="2">
    <location>
        <begin position="164"/>
        <end position="183"/>
    </location>
</feature>
<feature type="topological domain" description="Extracellular" evidence="2">
    <location>
        <begin position="184"/>
        <end position="191"/>
    </location>
</feature>
<feature type="transmembrane region" description="Helical; Name=5" evidence="2">
    <location>
        <begin position="192"/>
        <end position="211"/>
    </location>
</feature>
<feature type="topological domain" description="Cytoplasmic" evidence="2">
    <location>
        <begin position="212"/>
        <end position="240"/>
    </location>
</feature>
<feature type="transmembrane region" description="Helical; Name=6" evidence="2">
    <location>
        <begin position="241"/>
        <end position="266"/>
    </location>
</feature>
<feature type="topological domain" description="Extracellular" evidence="2">
    <location>
        <begin position="267"/>
        <end position="279"/>
    </location>
</feature>
<feature type="transmembrane region" description="Helical; Name=7" evidence="2">
    <location>
        <begin position="280"/>
        <end position="300"/>
    </location>
</feature>
<feature type="topological domain" description="Cytoplasmic" evidence="2">
    <location>
        <begin position="301"/>
        <end position="317"/>
    </location>
</feature>
<feature type="lipid moiety-binding region" description="S-palmitoyl cysteine" evidence="2">
    <location>
        <position position="315"/>
    </location>
</feature>
<feature type="glycosylation site" description="N-linked (GlcNAc...) asparagine" evidence="2">
    <location>
        <position position="29"/>
    </location>
</feature>
<sequence>MPVQGSQRRLLGSLNSTPTATPHLGLAANQTGARCLEVSIPDGLFLSLGLVSLVENVLVVTAIAKNRNLHSPMYCFICCLALSDLLVSGSNMLETAVILLLEAGALAARAAVVQQLDNVIDVITCSSMLASLCFLGAIAVDRYISIFYALRYHSIVTLPRARRAVAAIWVASVLFSMLFIAYYDHAAVLLCLVVFFLAMLVLMAVLYIHMLARARQHAQGIARLHKRQCPAHQGFGLKGAATLTILLGIFFLCWGPFFLHLTLIVLCPQHPTCSCIFKNFNLFLALIICNAIIDPLIYAFRSQELRRTLKEVLLCSW</sequence>
<gene>
    <name type="primary">MC1R</name>
</gene>
<keyword id="KW-1003">Cell membrane</keyword>
<keyword id="KW-0297">G-protein coupled receptor</keyword>
<keyword id="KW-0325">Glycoprotein</keyword>
<keyword id="KW-0449">Lipoprotein</keyword>
<keyword id="KW-0472">Membrane</keyword>
<keyword id="KW-0564">Palmitate</keyword>
<keyword id="KW-0675">Receptor</keyword>
<keyword id="KW-0807">Transducer</keyword>
<keyword id="KW-0812">Transmembrane</keyword>
<keyword id="KW-1133">Transmembrane helix</keyword>
<name>MSHR_CERMI</name>
<proteinExistence type="inferred from homology"/>
<comment type="function">
    <text evidence="1">Receptor for MSH (alpha, beta and gamma) and ACTH. The activity of this receptor is mediated by G proteins which activate adenylate cyclase. Mediates melanogenesis, the production of eumelanin (black/brown) and phaeomelanin (red/yellow), via regulation of cAMP signaling in melanocytes.</text>
</comment>
<comment type="subunit">
    <text evidence="1">Interacts with MGRN1, but does not undergo MGRN1-mediated ubiquitination; this interaction competes with GNAS-binding and thus inhibits agonist-induced cAMP production. Interacts with OPN3; the interaction results in a decrease in MC1R-mediated cAMP signaling and ultimately a decrease in melanin production in melanocytes.</text>
</comment>
<comment type="subcellular location">
    <subcellularLocation>
        <location evidence="1">Cell membrane</location>
        <topology evidence="2">Multi-pass membrane protein</topology>
    </subcellularLocation>
</comment>
<comment type="similarity">
    <text evidence="3">Belongs to the G-protein coupled receptor 1 family.</text>
</comment>
<dbReference type="EMBL" id="AY205098">
    <property type="protein sequence ID" value="AAP30972.1"/>
    <property type="molecule type" value="Genomic_DNA"/>
</dbReference>
<dbReference type="SMR" id="Q864J9"/>
<dbReference type="GlyCosmos" id="Q864J9">
    <property type="glycosylation" value="1 site, No reported glycans"/>
</dbReference>
<dbReference type="GO" id="GO:0005886">
    <property type="term" value="C:plasma membrane"/>
    <property type="evidence" value="ECO:0000250"/>
    <property type="project" value="UniProtKB"/>
</dbReference>
<dbReference type="GO" id="GO:0004980">
    <property type="term" value="F:melanocyte-stimulating hormone receptor activity"/>
    <property type="evidence" value="ECO:0007669"/>
    <property type="project" value="InterPro"/>
</dbReference>
<dbReference type="GO" id="GO:0007189">
    <property type="term" value="P:adenylate cyclase-activating G protein-coupled receptor signaling pathway"/>
    <property type="evidence" value="ECO:0007669"/>
    <property type="project" value="UniProtKB-ARBA"/>
</dbReference>
<dbReference type="CDD" id="cd15351">
    <property type="entry name" value="7tmA_MC1R"/>
    <property type="match status" value="1"/>
</dbReference>
<dbReference type="FunFam" id="1.20.1070.10:FF:000211">
    <property type="entry name" value="Melanocyte-stimulating hormone receptor"/>
    <property type="match status" value="1"/>
</dbReference>
<dbReference type="Gene3D" id="1.20.1070.10">
    <property type="entry name" value="Rhodopsin 7-helix transmembrane proteins"/>
    <property type="match status" value="1"/>
</dbReference>
<dbReference type="InterPro" id="IPR000276">
    <property type="entry name" value="GPCR_Rhodpsn"/>
</dbReference>
<dbReference type="InterPro" id="IPR017452">
    <property type="entry name" value="GPCR_Rhodpsn_7TM"/>
</dbReference>
<dbReference type="InterPro" id="IPR001671">
    <property type="entry name" value="Melcrt_ACTH_rcpt"/>
</dbReference>
<dbReference type="InterPro" id="IPR000761">
    <property type="entry name" value="MSH_rcpt"/>
</dbReference>
<dbReference type="PANTHER" id="PTHR22750">
    <property type="entry name" value="G-PROTEIN COUPLED RECEPTOR"/>
    <property type="match status" value="1"/>
</dbReference>
<dbReference type="Pfam" id="PF00001">
    <property type="entry name" value="7tm_1"/>
    <property type="match status" value="2"/>
</dbReference>
<dbReference type="PRINTS" id="PR00237">
    <property type="entry name" value="GPCRRHODOPSN"/>
</dbReference>
<dbReference type="PRINTS" id="PR00534">
    <property type="entry name" value="MCRFAMILY"/>
</dbReference>
<dbReference type="PRINTS" id="PR00536">
    <property type="entry name" value="MELNOCYTESHR"/>
</dbReference>
<dbReference type="SMART" id="SM01381">
    <property type="entry name" value="7TM_GPCR_Srsx"/>
    <property type="match status" value="1"/>
</dbReference>
<dbReference type="SUPFAM" id="SSF81321">
    <property type="entry name" value="Family A G protein-coupled receptor-like"/>
    <property type="match status" value="1"/>
</dbReference>
<dbReference type="PROSITE" id="PS00237">
    <property type="entry name" value="G_PROTEIN_RECEP_F1_1"/>
    <property type="match status" value="1"/>
</dbReference>
<dbReference type="PROSITE" id="PS50262">
    <property type="entry name" value="G_PROTEIN_RECEP_F1_2"/>
    <property type="match status" value="1"/>
</dbReference>
<reference key="1">
    <citation type="journal article" date="2003" name="Am. J. Phys. Anthropol.">
        <title>Evolution of a pigmentation gene, the melanocortin-1 receptor, in primates.</title>
        <authorList>
            <person name="Mundy N.I."/>
            <person name="Kelly J."/>
        </authorList>
    </citation>
    <scope>NUCLEOTIDE SEQUENCE [GENOMIC DNA]</scope>
    <source>
        <strain>Isolate 1</strain>
    </source>
</reference>
<evidence type="ECO:0000250" key="1">
    <source>
        <dbReference type="UniProtKB" id="Q01726"/>
    </source>
</evidence>
<evidence type="ECO:0000255" key="2"/>
<evidence type="ECO:0000255" key="3">
    <source>
        <dbReference type="PROSITE-ProRule" id="PRU00521"/>
    </source>
</evidence>
<protein>
    <recommendedName>
        <fullName>Melanocyte-stimulating hormone receptor</fullName>
        <shortName>MSH-R</shortName>
    </recommendedName>
    <alternativeName>
        <fullName>Melanocortin receptor 1</fullName>
        <shortName>MC1-R</shortName>
    </alternativeName>
</protein>
<accession>Q864J9</accession>
<organism>
    <name type="scientific">Cercopithecus mitis</name>
    <name type="common">Blue monkey</name>
    <dbReference type="NCBI Taxonomy" id="36225"/>
    <lineage>
        <taxon>Eukaryota</taxon>
        <taxon>Metazoa</taxon>
        <taxon>Chordata</taxon>
        <taxon>Craniata</taxon>
        <taxon>Vertebrata</taxon>
        <taxon>Euteleostomi</taxon>
        <taxon>Mammalia</taxon>
        <taxon>Eutheria</taxon>
        <taxon>Euarchontoglires</taxon>
        <taxon>Primates</taxon>
        <taxon>Haplorrhini</taxon>
        <taxon>Catarrhini</taxon>
        <taxon>Cercopithecidae</taxon>
        <taxon>Cercopithecinae</taxon>
        <taxon>Cercopithecus</taxon>
    </lineage>
</organism>